<keyword id="KW-0002">3D-structure</keyword>
<keyword id="KW-0004">4Fe-4S</keyword>
<keyword id="KW-0408">Iron</keyword>
<keyword id="KW-0411">Iron-sulfur</keyword>
<keyword id="KW-0479">Metal-binding</keyword>
<keyword id="KW-0500">Molybdenum</keyword>
<keyword id="KW-0560">Oxidoreductase</keyword>
<keyword id="KW-0574">Periplasm</keyword>
<keyword id="KW-0732">Signal</keyword>
<sequence>MKKENQVNLGRRQLLKSTAAGTVLTGIGGTLSFTPIVEGIAAELPAPLRRTGVGEWLATTCQGCTSWCAKQIYVMDGRALKVRGNPNSGVHGMSSCPRQHLSLQQVYDPDRLRTPMMRTNPKKGRDQDPKFVPISWDKALDMLADKIIALRVANEPHKYALLRGRYSHINDLLYKKMTNLIGSPNNISHSSVCAEAHKMGPYYLDGNWGYNQYDVKNAKFILSFGADPIASNRQVSFYSQTWGDSLDHAKVVVVDPRLSASAAKAHKWIPIEPGQDSVLALAIAHVALVEGVWHKPFVGDFIEGKNLFKAGKTVSVESFKETHTYGLVEWWNQALKDYTPEWASKITGIDPKTIIAIAKDMGAAAPAVQVWTSRGAVMQARGTYTSISCHALNGLFGGIDSKGGLFPGNKTPLLKEYPEAKAYMDEIAAKGVKKEKIDQRGRLEFPALAKGKSGGGVITANAANGIRNQDPYEIKVMLAYFNNFNFSNPEGQRWDEALSKVDFMAHITTNVSEFSWFADVLLPSSHHMFEKWGVLDSIGNGVAQISIQQPSIKRLWDTRIDESEIPYMLAKKLADKGFDAPWRYINEQIVDPETGKPAADEAEFAKLMVRYLTAPLWKEDASKYGDKLSSWDEFVQKGVWNSSPYKLEARWGKFKTETTKFEFYSKTLEKALQSHADKHKVSIDEVMKACDYQARGHLAFIPHYEEPYRFGDESEFPLLLVDQKSRLNKEGRTANSPWYYEFKDVDPGDVANEDVAKFNPIDGKKFGLKDGDEIRITSPVGMLTCKAKLWEGVRPGTVAKCFGQGHWAYGRYASAKFGVTPRGGSNNDLIADRYDRLSGASAFYGHIRVRVEKV</sequence>
<reference key="1">
    <citation type="journal article" date="2003" name="Proc. Natl. Acad. Sci. U.S.A.">
        <title>Genetic identification of a respiratory arsenate reductase.</title>
        <authorList>
            <person name="Saltikov C.W."/>
            <person name="Newman D.K."/>
        </authorList>
    </citation>
    <scope>NUCLEOTIDE SEQUENCE [GENOMIC DNA]</scope>
    <scope>FUNCTION</scope>
    <scope>DISRUPTION PHENOTYPE</scope>
    <source>
        <strain>ANA-3</strain>
    </source>
</reference>
<reference key="2">
    <citation type="submission" date="2006-09" db="EMBL/GenBank/DDBJ databases">
        <title>Complete sequence of chromosome 1 of Shewanella sp. ANA-3.</title>
        <authorList>
            <person name="Copeland A."/>
            <person name="Lucas S."/>
            <person name="Lapidus A."/>
            <person name="Barry K."/>
            <person name="Detter J.C."/>
            <person name="Glavina del Rio T."/>
            <person name="Hammon N."/>
            <person name="Israni S."/>
            <person name="Dalin E."/>
            <person name="Tice H."/>
            <person name="Pitluck S."/>
            <person name="Chertkov O."/>
            <person name="Brettin T."/>
            <person name="Bruce D."/>
            <person name="Han C."/>
            <person name="Tapia R."/>
            <person name="Gilna P."/>
            <person name="Schmutz J."/>
            <person name="Larimer F."/>
            <person name="Land M."/>
            <person name="Hauser L."/>
            <person name="Kyrpides N."/>
            <person name="Kim E."/>
            <person name="Newman D."/>
            <person name="Salticov C."/>
            <person name="Konstantinidis K."/>
            <person name="Klappenback J."/>
            <person name="Tiedje J."/>
            <person name="Richardson P."/>
        </authorList>
    </citation>
    <scope>NUCLEOTIDE SEQUENCE [LARGE SCALE GENOMIC DNA]</scope>
    <source>
        <strain>ANA-3</strain>
    </source>
</reference>
<reference key="3">
    <citation type="journal article" date="2005" name="J. Bacteriol.">
        <title>Expression dynamics of arsenic respiration and detoxification in Shewanella sp. strain ANA-3.</title>
        <authorList>
            <person name="Saltikov C.W."/>
            <person name="Wildman R.A. Jr."/>
            <person name="Newman D.K."/>
        </authorList>
    </citation>
    <scope>INDUCTION</scope>
    <source>
        <strain>ANA-3</strain>
    </source>
</reference>
<reference key="4">
    <citation type="journal article" date="2008" name="J. Bacteriol.">
        <title>Characterization of the arsenate respiratory reductase from Shewanella sp. strain ANA-3.</title>
        <authorList>
            <person name="Malasarn D."/>
            <person name="Keeffe J.R."/>
            <person name="Newman D.K."/>
        </authorList>
    </citation>
    <scope>FUNCTION</scope>
    <scope>CATALYTIC ACTIVITY</scope>
    <scope>COFACTOR</scope>
    <scope>BIOPHYSICOCHEMICAL PROPERTIES</scope>
    <scope>SUBUNIT</scope>
    <scope>SUBCELLULAR LOCATION</scope>
    <scope>IDENTIFICATION BY MASS SPECTROMETRY</scope>
    <source>
        <strain>ANA-3</strain>
    </source>
</reference>
<reference evidence="11 12 13 14" key="5">
    <citation type="journal article" date="2018" name="Proc. Natl. Acad. Sci. U.S.A.">
        <title>Structural and mechanistic analysis of the arsenate respiratory reductase provides insight into environmental arsenic transformations.</title>
        <authorList>
            <person name="Glasser N.R."/>
            <person name="Oyala P.H."/>
            <person name="Osborne T.H."/>
            <person name="Santini J.M."/>
            <person name="Newman D.K."/>
        </authorList>
    </citation>
    <scope>X-RAY CRYSTALLOGRAPHY (1.62 ANGSTROMS) OF 42-854 IN COMPLEXES WITH ARRB; IRON-SULFUR (4FE-4S); MOLYBDENUM ION; MOLYBDOPTERIN; ARSENITE AND ARSENATE</scope>
    <scope>FUNCTION</scope>
    <scope>CATALYTIC ACTIVITY</scope>
    <scope>COFACTOR</scope>
    <scope>ACTIVITY REGULATION</scope>
    <scope>BIOPHYSICOCHEMICAL PROPERTIES</scope>
    <scope>SUBUNIT</scope>
</reference>
<evidence type="ECO:0000255" key="1">
    <source>
        <dbReference type="PROSITE-ProRule" id="PRU00648"/>
    </source>
</evidence>
<evidence type="ECO:0000255" key="2">
    <source>
        <dbReference type="PROSITE-ProRule" id="PRU01004"/>
    </source>
</evidence>
<evidence type="ECO:0000269" key="3">
    <source>
    </source>
</evidence>
<evidence type="ECO:0000269" key="4">
    <source>
    </source>
</evidence>
<evidence type="ECO:0000269" key="5">
    <source>
    </source>
</evidence>
<evidence type="ECO:0000269" key="6">
    <source>
    </source>
</evidence>
<evidence type="ECO:0000303" key="7">
    <source>
    </source>
</evidence>
<evidence type="ECO:0000305" key="8"/>
<evidence type="ECO:0000305" key="9">
    <source>
    </source>
</evidence>
<evidence type="ECO:0000312" key="10">
    <source>
        <dbReference type="EMBL" id="ABK48570.1"/>
    </source>
</evidence>
<evidence type="ECO:0007744" key="11">
    <source>
        <dbReference type="PDB" id="6CZ7"/>
    </source>
</evidence>
<evidence type="ECO:0007744" key="12">
    <source>
        <dbReference type="PDB" id="6CZ8"/>
    </source>
</evidence>
<evidence type="ECO:0007744" key="13">
    <source>
        <dbReference type="PDB" id="6CZ9"/>
    </source>
</evidence>
<evidence type="ECO:0007744" key="14">
    <source>
        <dbReference type="PDB" id="6CZA"/>
    </source>
</evidence>
<evidence type="ECO:0007829" key="15">
    <source>
        <dbReference type="PDB" id="6CZ7"/>
    </source>
</evidence>
<comment type="function">
    <text evidence="3 5 6">Component of the arsenate respiratory reductase (Arr) complex, which catalyzes the reduction of arsenate (As(V)) to arsenite (As(III)) (PubMed:12939408, PubMed:17951391, PubMed:30104376). ArrA is the arsenate-binding subunit (PubMed:30104376). The periplasmic localization of this complex may allow the cell to couple arsenate reduction to energy production before arsenate can be transported to the cell cytoplasm and enter the ars detoxification pathway, an energy-requiring process (PubMed:17951391).</text>
</comment>
<comment type="catalytic activity">
    <reaction evidence="5 6">
        <text>arsenite + A + H2O = arsenate + AH2 + H(+)</text>
        <dbReference type="Rhea" id="RHEA:18449"/>
        <dbReference type="ChEBI" id="CHEBI:13193"/>
        <dbReference type="ChEBI" id="CHEBI:15377"/>
        <dbReference type="ChEBI" id="CHEBI:15378"/>
        <dbReference type="ChEBI" id="CHEBI:17499"/>
        <dbReference type="ChEBI" id="CHEBI:29242"/>
        <dbReference type="ChEBI" id="CHEBI:48597"/>
        <dbReference type="EC" id="1.20.99.1"/>
    </reaction>
</comment>
<comment type="cofactor">
    <cofactor evidence="6 9">
        <name>[4Fe-4S] cluster</name>
        <dbReference type="ChEBI" id="CHEBI:49883"/>
    </cofactor>
    <text evidence="6">Binds 1 [4Fe-4S] cluster.</text>
</comment>
<comment type="cofactor">
    <cofactor evidence="5 6">
        <name>Mo-bis(molybdopterin guanine dinucleotide)</name>
        <dbReference type="ChEBI" id="CHEBI:60539"/>
    </cofactor>
    <text evidence="6">Binds 1 molybdenum-bis(molybdopterin guanine dinucleotide) (Mo-bis-MGD) cofactor per subunit.</text>
</comment>
<comment type="activity regulation">
    <text evidence="6">Phosphate is a competitive inhibitor.</text>
</comment>
<comment type="biophysicochemical properties">
    <kinetics>
        <KM evidence="5">5 uM for arsenate</KM>
        <KM evidence="6">44.6 uM for arsenate</KM>
        <Vmax evidence="5">11111.0 umol/min/mg enzyme</Vmax>
        <text evidence="6">kcat is 9810 sec(-1).</text>
    </kinetics>
    <phDependence>
        <text evidence="6">Optimum pH is 7.5.</text>
    </phDependence>
</comment>
<comment type="subunit">
    <text evidence="5 6">Heterodimer composed of one large subunit (ArrA) and one small subunit (ArrB).</text>
</comment>
<comment type="subcellular location">
    <subcellularLocation>
        <location evidence="5">Periplasm</location>
    </subcellularLocation>
</comment>
<comment type="induction">
    <text evidence="4">The arrA-arrB operon is induced under anaerobic conditions in the presence of nanomolar concentrations of arsenite or low micromolar concentrations of arsenate (PubMed:16237022). Expression is repressed under aerobic conditions and in the presence of nitrate (PubMed:16237022). The peak of expression occurs during the exponential phase of growth (PubMed:16237022).</text>
</comment>
<comment type="PTM">
    <text evidence="1">Predicted to be exported by the Tat system. The position of the signal peptide cleavage has not been experimentally proven.</text>
</comment>
<comment type="disruption phenotype">
    <text evidence="3">Deletion mutants are incapable of growing on arsenate, but are still able to grow on a wide variety of other electron acceptors as efficiently as the wild-type.</text>
</comment>
<comment type="similarity">
    <text evidence="8">Belongs to the prokaryotic molybdopterin-containing oxidoreductase family.</text>
</comment>
<protein>
    <recommendedName>
        <fullName evidence="8">Arsenate respiratory reductase molybdopterin-containing subunit ArrA</fullName>
        <ecNumber evidence="5">1.20.99.1</ecNumber>
    </recommendedName>
    <alternativeName>
        <fullName evidence="8">Arsenate respiratory reductase large subunit</fullName>
        <shortName evidence="8">ARR large subunit</shortName>
    </alternativeName>
</protein>
<gene>
    <name evidence="7" type="primary">arrA</name>
    <name evidence="10" type="ordered locus">Shewana3_2341</name>
</gene>
<name>ARRA_SHESA</name>
<feature type="signal peptide" description="Tat-type signal" evidence="1">
    <location>
        <begin position="1"/>
        <end position="41"/>
    </location>
</feature>
<feature type="chain" id="PRO_0000456239" description="Arsenate respiratory reductase molybdopterin-containing subunit ArrA">
    <location>
        <begin position="42"/>
        <end position="854"/>
    </location>
</feature>
<feature type="domain" description="4Fe-4S Mo/W bis-MGD-type" evidence="2">
    <location>
        <begin position="54"/>
        <end position="110"/>
    </location>
</feature>
<feature type="binding site" evidence="6 11 12 13 14">
    <location>
        <position position="61"/>
    </location>
    <ligand>
        <name>[4Fe-4S] cluster</name>
        <dbReference type="ChEBI" id="CHEBI:49883"/>
    </ligand>
</feature>
<feature type="binding site" evidence="6 11 12 13 14">
    <location>
        <position position="64"/>
    </location>
    <ligand>
        <name>[4Fe-4S] cluster</name>
        <dbReference type="ChEBI" id="CHEBI:49883"/>
    </ligand>
</feature>
<feature type="binding site" evidence="6 11 12 13 14">
    <location>
        <position position="68"/>
    </location>
    <ligand>
        <name>[4Fe-4S] cluster</name>
        <dbReference type="ChEBI" id="CHEBI:49883"/>
    </ligand>
</feature>
<feature type="binding site" evidence="6 11 12 13 14">
    <location>
        <position position="96"/>
    </location>
    <ligand>
        <name>[4Fe-4S] cluster</name>
        <dbReference type="ChEBI" id="CHEBI:49883"/>
    </ligand>
</feature>
<feature type="binding site" evidence="6 13">
    <location>
        <position position="165"/>
    </location>
    <ligand>
        <name>arsenite</name>
        <dbReference type="ChEBI" id="CHEBI:29242"/>
    </ligand>
</feature>
<feature type="binding site" evidence="6 12">
    <location>
        <position position="166"/>
    </location>
    <ligand>
        <name>arsenate</name>
        <dbReference type="ChEBI" id="CHEBI:48597"/>
    </ligand>
</feature>
<feature type="binding site" evidence="6 13">
    <location>
        <position position="189"/>
    </location>
    <ligand>
        <name>arsenite</name>
        <dbReference type="ChEBI" id="CHEBI:29242"/>
    </ligand>
</feature>
<feature type="binding site" evidence="6 12">
    <location>
        <position position="190"/>
    </location>
    <ligand>
        <name>arsenate</name>
        <dbReference type="ChEBI" id="CHEBI:48597"/>
    </ligand>
</feature>
<feature type="binding site" evidence="6 11 12 13 14">
    <location>
        <position position="193"/>
    </location>
    <ligand>
        <name>Mo-bis(molybdopterin guanine dinucleotide)</name>
        <dbReference type="ChEBI" id="CHEBI:60539"/>
    </ligand>
    <ligandPart>
        <name>Mo</name>
        <dbReference type="ChEBI" id="CHEBI:28685"/>
    </ligandPart>
</feature>
<feature type="binding site" evidence="6 12">
    <location>
        <position position="198"/>
    </location>
    <ligand>
        <name>arsenate</name>
        <dbReference type="ChEBI" id="CHEBI:48597"/>
    </ligand>
</feature>
<feature type="binding site" evidence="6 13">
    <location>
        <position position="210"/>
    </location>
    <ligand>
        <name>arsenite</name>
        <dbReference type="ChEBI" id="CHEBI:29242"/>
    </ligand>
</feature>
<feature type="helix" evidence="15">
    <location>
        <begin position="46"/>
        <end position="48"/>
    </location>
</feature>
<feature type="strand" evidence="15">
    <location>
        <begin position="54"/>
        <end position="60"/>
    </location>
</feature>
<feature type="strand" evidence="15">
    <location>
        <begin position="69"/>
        <end position="75"/>
    </location>
</feature>
<feature type="strand" evidence="15">
    <location>
        <begin position="78"/>
        <end position="84"/>
    </location>
</feature>
<feature type="turn" evidence="15">
    <location>
        <begin position="89"/>
        <end position="93"/>
    </location>
</feature>
<feature type="helix" evidence="15">
    <location>
        <begin position="97"/>
        <end position="102"/>
    </location>
</feature>
<feature type="helix" evidence="15">
    <location>
        <begin position="103"/>
        <end position="106"/>
    </location>
</feature>
<feature type="helix" evidence="15">
    <location>
        <begin position="136"/>
        <end position="152"/>
    </location>
</feature>
<feature type="helix" evidence="15">
    <location>
        <begin position="156"/>
        <end position="158"/>
    </location>
</feature>
<feature type="strand" evidence="15">
    <location>
        <begin position="159"/>
        <end position="165"/>
    </location>
</feature>
<feature type="turn" evidence="15">
    <location>
        <begin position="168"/>
        <end position="170"/>
    </location>
</feature>
<feature type="helix" evidence="15">
    <location>
        <begin position="171"/>
        <end position="174"/>
    </location>
</feature>
<feature type="helix" evidence="15">
    <location>
        <begin position="176"/>
        <end position="181"/>
    </location>
</feature>
<feature type="helix" evidence="15">
    <location>
        <begin position="190"/>
        <end position="192"/>
    </location>
</feature>
<feature type="helix" evidence="15">
    <location>
        <begin position="195"/>
        <end position="198"/>
    </location>
</feature>
<feature type="helix" evidence="15">
    <location>
        <begin position="199"/>
        <end position="205"/>
    </location>
</feature>
<feature type="helix" evidence="15">
    <location>
        <begin position="215"/>
        <end position="217"/>
    </location>
</feature>
<feature type="strand" evidence="15">
    <location>
        <begin position="219"/>
        <end position="225"/>
    </location>
</feature>
<feature type="turn" evidence="15">
    <location>
        <begin position="228"/>
        <end position="230"/>
    </location>
</feature>
<feature type="strand" evidence="15">
    <location>
        <begin position="231"/>
        <end position="233"/>
    </location>
</feature>
<feature type="helix" evidence="15">
    <location>
        <begin position="235"/>
        <end position="245"/>
    </location>
</feature>
<feature type="turn" evidence="15">
    <location>
        <begin position="246"/>
        <end position="248"/>
    </location>
</feature>
<feature type="strand" evidence="15">
    <location>
        <begin position="250"/>
        <end position="254"/>
    </location>
</feature>
<feature type="helix" evidence="15">
    <location>
        <begin position="260"/>
        <end position="263"/>
    </location>
</feature>
<feature type="strand" evidence="15">
    <location>
        <begin position="265"/>
        <end position="269"/>
    </location>
</feature>
<feature type="helix" evidence="15">
    <location>
        <begin position="276"/>
        <end position="290"/>
    </location>
</feature>
<feature type="helix" evidence="15">
    <location>
        <begin position="295"/>
        <end position="298"/>
    </location>
</feature>
<feature type="strand" evidence="15">
    <location>
        <begin position="299"/>
        <end position="301"/>
    </location>
</feature>
<feature type="helix" evidence="15">
    <location>
        <begin position="316"/>
        <end position="318"/>
    </location>
</feature>
<feature type="strand" evidence="15">
    <location>
        <begin position="319"/>
        <end position="325"/>
    </location>
</feature>
<feature type="helix" evidence="15">
    <location>
        <begin position="327"/>
        <end position="333"/>
    </location>
</feature>
<feature type="helix" evidence="15">
    <location>
        <begin position="335"/>
        <end position="337"/>
    </location>
</feature>
<feature type="helix" evidence="15">
    <location>
        <begin position="340"/>
        <end position="347"/>
    </location>
</feature>
<feature type="helix" evidence="15">
    <location>
        <begin position="351"/>
        <end position="364"/>
    </location>
</feature>
<feature type="strand" evidence="15">
    <location>
        <begin position="367"/>
        <end position="372"/>
    </location>
</feature>
<feature type="helix" evidence="15">
    <location>
        <begin position="374"/>
        <end position="377"/>
    </location>
</feature>
<feature type="turn" evidence="15">
    <location>
        <begin position="380"/>
        <end position="382"/>
    </location>
</feature>
<feature type="helix" evidence="15">
    <location>
        <begin position="383"/>
        <end position="395"/>
    </location>
</feature>
<feature type="strand" evidence="15">
    <location>
        <begin position="404"/>
        <end position="406"/>
    </location>
</feature>
<feature type="helix" evidence="15">
    <location>
        <begin position="421"/>
        <end position="423"/>
    </location>
</feature>
<feature type="helix" evidence="15">
    <location>
        <begin position="426"/>
        <end position="431"/>
    </location>
</feature>
<feature type="helix" evidence="15">
    <location>
        <begin position="449"/>
        <end position="451"/>
    </location>
</feature>
<feature type="helix" evidence="15">
    <location>
        <begin position="459"/>
        <end position="468"/>
    </location>
</feature>
<feature type="strand" evidence="15">
    <location>
        <begin position="476"/>
        <end position="481"/>
    </location>
</feature>
<feature type="helix" evidence="15">
    <location>
        <begin position="484"/>
        <end position="487"/>
    </location>
</feature>
<feature type="turn" evidence="15">
    <location>
        <begin position="489"/>
        <end position="491"/>
    </location>
</feature>
<feature type="helix" evidence="15">
    <location>
        <begin position="492"/>
        <end position="499"/>
    </location>
</feature>
<feature type="strand" evidence="15">
    <location>
        <begin position="502"/>
        <end position="510"/>
    </location>
</feature>
<feature type="helix" evidence="15">
    <location>
        <begin position="514"/>
        <end position="517"/>
    </location>
</feature>
<feature type="strand" evidence="15">
    <location>
        <begin position="519"/>
        <end position="524"/>
    </location>
</feature>
<feature type="turn" evidence="15">
    <location>
        <begin position="527"/>
        <end position="529"/>
    </location>
</feature>
<feature type="strand" evidence="15">
    <location>
        <begin position="533"/>
        <end position="539"/>
    </location>
</feature>
<feature type="strand" evidence="15">
    <location>
        <begin position="542"/>
        <end position="548"/>
    </location>
</feature>
<feature type="turn" evidence="15">
    <location>
        <begin position="561"/>
        <end position="563"/>
    </location>
</feature>
<feature type="helix" evidence="15">
    <location>
        <begin position="564"/>
        <end position="575"/>
    </location>
</feature>
<feature type="helix" evidence="15">
    <location>
        <begin position="580"/>
        <end position="588"/>
    </location>
</feature>
<feature type="turn" evidence="15">
    <location>
        <begin position="592"/>
        <end position="594"/>
    </location>
</feature>
<feature type="helix" evidence="15">
    <location>
        <begin position="601"/>
        <end position="617"/>
    </location>
</feature>
<feature type="turn" evidence="15">
    <location>
        <begin position="622"/>
        <end position="624"/>
    </location>
</feature>
<feature type="helix" evidence="15">
    <location>
        <begin position="631"/>
        <end position="637"/>
    </location>
</feature>
<feature type="strand" evidence="15">
    <location>
        <begin position="639"/>
        <end position="642"/>
    </location>
</feature>
<feature type="turn" evidence="15">
    <location>
        <begin position="647"/>
        <end position="652"/>
    </location>
</feature>
<feature type="strand" evidence="15">
    <location>
        <begin position="655"/>
        <end position="664"/>
    </location>
</feature>
<feature type="helix" evidence="15">
    <location>
        <begin position="666"/>
        <end position="678"/>
    </location>
</feature>
<feature type="helix" evidence="15">
    <location>
        <begin position="683"/>
        <end position="689"/>
    </location>
</feature>
<feature type="helix" evidence="15">
    <location>
        <begin position="696"/>
        <end position="700"/>
    </location>
</feature>
<feature type="turn" evidence="15">
    <location>
        <begin position="713"/>
        <end position="715"/>
    </location>
</feature>
<feature type="strand" evidence="15">
    <location>
        <begin position="718"/>
        <end position="724"/>
    </location>
</feature>
<feature type="helix" evidence="15">
    <location>
        <begin position="737"/>
        <end position="741"/>
    </location>
</feature>
<feature type="helix" evidence="15">
    <location>
        <begin position="743"/>
        <end position="745"/>
    </location>
</feature>
<feature type="strand" evidence="15">
    <location>
        <begin position="755"/>
        <end position="758"/>
    </location>
</feature>
<feature type="helix" evidence="15">
    <location>
        <begin position="760"/>
        <end position="766"/>
    </location>
</feature>
<feature type="strand" evidence="15">
    <location>
        <begin position="773"/>
        <end position="777"/>
    </location>
</feature>
<feature type="strand" evidence="15">
    <location>
        <begin position="782"/>
        <end position="789"/>
    </location>
</feature>
<feature type="strand" evidence="15">
    <location>
        <begin position="797"/>
        <end position="803"/>
    </location>
</feature>
<feature type="strand" evidence="15">
    <location>
        <begin position="807"/>
        <end position="809"/>
    </location>
</feature>
<feature type="turn" evidence="15">
    <location>
        <begin position="811"/>
        <end position="813"/>
    </location>
</feature>
<feature type="strand" evidence="15">
    <location>
        <begin position="814"/>
        <end position="816"/>
    </location>
</feature>
<feature type="turn" evidence="15">
    <location>
        <begin position="817"/>
        <end position="819"/>
    </location>
</feature>
<feature type="strand" evidence="15">
    <location>
        <begin position="820"/>
        <end position="823"/>
    </location>
</feature>
<feature type="helix" evidence="15">
    <location>
        <begin position="826"/>
        <end position="829"/>
    </location>
</feature>
<feature type="turn" evidence="15">
    <location>
        <begin position="836"/>
        <end position="838"/>
    </location>
</feature>
<feature type="strand" evidence="15">
    <location>
        <begin position="844"/>
        <end position="853"/>
    </location>
</feature>
<accession>Q7WTU0</accession>
<dbReference type="EC" id="1.20.99.1" evidence="5"/>
<dbReference type="EMBL" id="AY271310">
    <property type="protein sequence ID" value="AAQ01672.1"/>
    <property type="molecule type" value="Genomic_DNA"/>
</dbReference>
<dbReference type="EMBL" id="CP000469">
    <property type="protein sequence ID" value="ABK48570.1"/>
    <property type="molecule type" value="Genomic_DNA"/>
</dbReference>
<dbReference type="RefSeq" id="WP_011717272.1">
    <property type="nucleotide sequence ID" value="NC_008577.1"/>
</dbReference>
<dbReference type="PDB" id="6CZ7">
    <property type="method" value="X-ray"/>
    <property type="resolution" value="1.62 A"/>
    <property type="chains" value="A/C=42-854"/>
</dbReference>
<dbReference type="PDB" id="6CZ8">
    <property type="method" value="X-ray"/>
    <property type="resolution" value="1.78 A"/>
    <property type="chains" value="A/C=42-854"/>
</dbReference>
<dbReference type="PDB" id="6CZ9">
    <property type="method" value="X-ray"/>
    <property type="resolution" value="1.80 A"/>
    <property type="chains" value="A/C=42-854"/>
</dbReference>
<dbReference type="PDB" id="6CZA">
    <property type="method" value="X-ray"/>
    <property type="resolution" value="1.71 A"/>
    <property type="chains" value="A/C=42-854"/>
</dbReference>
<dbReference type="PDBsum" id="6CZ7"/>
<dbReference type="PDBsum" id="6CZ8"/>
<dbReference type="PDBsum" id="6CZ9"/>
<dbReference type="PDBsum" id="6CZA"/>
<dbReference type="SMR" id="Q7WTU0"/>
<dbReference type="STRING" id="94122.Shewana3_2341"/>
<dbReference type="KEGG" id="shn:Shewana3_2341"/>
<dbReference type="eggNOG" id="COG0243">
    <property type="taxonomic scope" value="Bacteria"/>
</dbReference>
<dbReference type="HOGENOM" id="CLU_000422_13_3_6"/>
<dbReference type="OrthoDB" id="9815647at2"/>
<dbReference type="BioCyc" id="MetaCyc:MONOMER-10761"/>
<dbReference type="Proteomes" id="UP000002589">
    <property type="component" value="Chromosome"/>
</dbReference>
<dbReference type="GO" id="GO:0042597">
    <property type="term" value="C:periplasmic space"/>
    <property type="evidence" value="ECO:0007669"/>
    <property type="project" value="UniProtKB-SubCell"/>
</dbReference>
<dbReference type="GO" id="GO:0051539">
    <property type="term" value="F:4 iron, 4 sulfur cluster binding"/>
    <property type="evidence" value="ECO:0007669"/>
    <property type="project" value="UniProtKB-KW"/>
</dbReference>
<dbReference type="GO" id="GO:0046872">
    <property type="term" value="F:metal ion binding"/>
    <property type="evidence" value="ECO:0007669"/>
    <property type="project" value="UniProtKB-KW"/>
</dbReference>
<dbReference type="GO" id="GO:0043546">
    <property type="term" value="F:molybdopterin cofactor binding"/>
    <property type="evidence" value="ECO:0007669"/>
    <property type="project" value="InterPro"/>
</dbReference>
<dbReference type="GO" id="GO:0016491">
    <property type="term" value="F:oxidoreductase activity"/>
    <property type="evidence" value="ECO:0007669"/>
    <property type="project" value="UniProtKB-KW"/>
</dbReference>
<dbReference type="CDD" id="cd02757">
    <property type="entry name" value="MopB_Arsenate-R"/>
    <property type="match status" value="1"/>
</dbReference>
<dbReference type="CDD" id="cd02780">
    <property type="entry name" value="MopB_CT_Tetrathionate_Arsenate-R"/>
    <property type="match status" value="1"/>
</dbReference>
<dbReference type="Gene3D" id="2.40.40.20">
    <property type="match status" value="1"/>
</dbReference>
<dbReference type="Gene3D" id="3.40.50.740">
    <property type="match status" value="1"/>
</dbReference>
<dbReference type="Gene3D" id="2.20.25.90">
    <property type="entry name" value="ADC-like domains"/>
    <property type="match status" value="1"/>
</dbReference>
<dbReference type="Gene3D" id="3.40.228.10">
    <property type="entry name" value="Dimethylsulfoxide Reductase, domain 2"/>
    <property type="match status" value="1"/>
</dbReference>
<dbReference type="InterPro" id="IPR053686">
    <property type="entry name" value="Arr_molybdopterin_subunit"/>
</dbReference>
<dbReference type="InterPro" id="IPR009010">
    <property type="entry name" value="Asp_de-COase-like_dom_sf"/>
</dbReference>
<dbReference type="InterPro" id="IPR037946">
    <property type="entry name" value="MopB_CT_Tetrathionate"/>
</dbReference>
<dbReference type="InterPro" id="IPR006657">
    <property type="entry name" value="MoPterin_dinucl-bd_dom"/>
</dbReference>
<dbReference type="InterPro" id="IPR006656">
    <property type="entry name" value="Mopterin_OxRdtase"/>
</dbReference>
<dbReference type="InterPro" id="IPR006963">
    <property type="entry name" value="Mopterin_OxRdtase_4Fe-4S_dom"/>
</dbReference>
<dbReference type="InterPro" id="IPR050612">
    <property type="entry name" value="Prok_Mopterin_Oxidored"/>
</dbReference>
<dbReference type="InterPro" id="IPR006311">
    <property type="entry name" value="TAT_signal"/>
</dbReference>
<dbReference type="NCBIfam" id="NF041714">
    <property type="entry name" value="arsenate_red_ArrA"/>
    <property type="match status" value="1"/>
</dbReference>
<dbReference type="PANTHER" id="PTHR43742:SF9">
    <property type="entry name" value="TETRATHIONATE REDUCTASE SUBUNIT A"/>
    <property type="match status" value="1"/>
</dbReference>
<dbReference type="PANTHER" id="PTHR43742">
    <property type="entry name" value="TRIMETHYLAMINE-N-OXIDE REDUCTASE"/>
    <property type="match status" value="1"/>
</dbReference>
<dbReference type="Pfam" id="PF04879">
    <property type="entry name" value="Molybdop_Fe4S4"/>
    <property type="match status" value="1"/>
</dbReference>
<dbReference type="Pfam" id="PF00384">
    <property type="entry name" value="Molybdopterin"/>
    <property type="match status" value="1"/>
</dbReference>
<dbReference type="Pfam" id="PF01568">
    <property type="entry name" value="Molydop_binding"/>
    <property type="match status" value="1"/>
</dbReference>
<dbReference type="SMART" id="SM00926">
    <property type="entry name" value="Molybdop_Fe4S4"/>
    <property type="match status" value="1"/>
</dbReference>
<dbReference type="SUPFAM" id="SSF50692">
    <property type="entry name" value="ADC-like"/>
    <property type="match status" value="1"/>
</dbReference>
<dbReference type="SUPFAM" id="SSF53706">
    <property type="entry name" value="Formate dehydrogenase/DMSO reductase, domains 1-3"/>
    <property type="match status" value="1"/>
</dbReference>
<dbReference type="PROSITE" id="PS51669">
    <property type="entry name" value="4FE4S_MOW_BIS_MGD"/>
    <property type="match status" value="1"/>
</dbReference>
<dbReference type="PROSITE" id="PS51318">
    <property type="entry name" value="TAT"/>
    <property type="match status" value="1"/>
</dbReference>
<proteinExistence type="evidence at protein level"/>
<organism>
    <name type="scientific">Shewanella sp. (strain ANA-3)</name>
    <dbReference type="NCBI Taxonomy" id="94122"/>
    <lineage>
        <taxon>Bacteria</taxon>
        <taxon>Pseudomonadati</taxon>
        <taxon>Pseudomonadota</taxon>
        <taxon>Gammaproteobacteria</taxon>
        <taxon>Alteromonadales</taxon>
        <taxon>Shewanellaceae</taxon>
        <taxon>Shewanella</taxon>
    </lineage>
</organism>